<name>OR7C1_HUMAN</name>
<organism>
    <name type="scientific">Homo sapiens</name>
    <name type="common">Human</name>
    <dbReference type="NCBI Taxonomy" id="9606"/>
    <lineage>
        <taxon>Eukaryota</taxon>
        <taxon>Metazoa</taxon>
        <taxon>Chordata</taxon>
        <taxon>Craniata</taxon>
        <taxon>Vertebrata</taxon>
        <taxon>Euteleostomi</taxon>
        <taxon>Mammalia</taxon>
        <taxon>Eutheria</taxon>
        <taxon>Euarchontoglires</taxon>
        <taxon>Primates</taxon>
        <taxon>Haplorrhini</taxon>
        <taxon>Catarrhini</taxon>
        <taxon>Hominidae</taxon>
        <taxon>Homo</taxon>
    </lineage>
</organism>
<accession>O76099</accession>
<accession>Q15621</accession>
<accession>Q6IFP2</accession>
<accession>Q96R94</accession>
<dbReference type="EMBL" id="AC005255">
    <property type="protein sequence ID" value="AAC25625.1"/>
    <property type="molecule type" value="Genomic_DNA"/>
</dbReference>
<dbReference type="EMBL" id="AF399546">
    <property type="protein sequence ID" value="AAK95031.1"/>
    <property type="molecule type" value="Genomic_DNA"/>
</dbReference>
<dbReference type="EMBL" id="X89676">
    <property type="protein sequence ID" value="CAA61823.1"/>
    <property type="molecule type" value="mRNA"/>
</dbReference>
<dbReference type="EMBL" id="BK004220">
    <property type="protein sequence ID" value="DAA04618.1"/>
    <property type="molecule type" value="Genomic_DNA"/>
</dbReference>
<dbReference type="CCDS" id="CCDS12317.1"/>
<dbReference type="PIR" id="S58004">
    <property type="entry name" value="S58004"/>
</dbReference>
<dbReference type="RefSeq" id="NP_001357414.2">
    <property type="nucleotide sequence ID" value="NM_001370485.4"/>
</dbReference>
<dbReference type="RefSeq" id="NP_945182.1">
    <property type="nucleotide sequence ID" value="NM_198944.1"/>
</dbReference>
<dbReference type="RefSeq" id="XP_005259910.1">
    <property type="nucleotide sequence ID" value="XM_005259853.3"/>
</dbReference>
<dbReference type="SMR" id="O76099"/>
<dbReference type="BioGRID" id="117779">
    <property type="interactions" value="3"/>
</dbReference>
<dbReference type="FunCoup" id="O76099">
    <property type="interactions" value="474"/>
</dbReference>
<dbReference type="IntAct" id="O76099">
    <property type="interactions" value="1"/>
</dbReference>
<dbReference type="STRING" id="9606.ENSP00000493026"/>
<dbReference type="GlyCosmos" id="O76099">
    <property type="glycosylation" value="1 site, No reported glycans"/>
</dbReference>
<dbReference type="GlyGen" id="O76099">
    <property type="glycosylation" value="3 sites, 1 O-linked glycan (1 site)"/>
</dbReference>
<dbReference type="iPTMnet" id="O76099"/>
<dbReference type="PhosphoSitePlus" id="O76099"/>
<dbReference type="BioMuta" id="OR7C1"/>
<dbReference type="MassIVE" id="O76099"/>
<dbReference type="PaxDb" id="9606-ENSP00000248073"/>
<dbReference type="PeptideAtlas" id="O76099"/>
<dbReference type="Antibodypedia" id="59279">
    <property type="antibodies" value="50 antibodies from 18 providers"/>
</dbReference>
<dbReference type="DNASU" id="26664"/>
<dbReference type="Ensembl" id="ENST00000248073.2">
    <property type="protein sequence ID" value="ENSP00000248073.2"/>
    <property type="gene ID" value="ENSG00000127530.4"/>
</dbReference>
<dbReference type="Ensembl" id="ENST00000641666.2">
    <property type="protein sequence ID" value="ENSP00000493429.1"/>
    <property type="gene ID" value="ENSG00000127530.4"/>
</dbReference>
<dbReference type="Ensembl" id="ENST00000642000.1">
    <property type="protein sequence ID" value="ENSP00000493248.1"/>
    <property type="gene ID" value="ENSG00000127530.4"/>
</dbReference>
<dbReference type="Ensembl" id="ENST00000642030.1">
    <property type="protein sequence ID" value="ENSP00000493026.1"/>
    <property type="gene ID" value="ENSG00000127530.4"/>
</dbReference>
<dbReference type="GeneID" id="26664"/>
<dbReference type="KEGG" id="hsa:26664"/>
<dbReference type="MANE-Select" id="ENST00000641666.2">
    <property type="protein sequence ID" value="ENSP00000493429.1"/>
    <property type="RefSeq nucleotide sequence ID" value="NM_001370485.4"/>
    <property type="RefSeq protein sequence ID" value="NP_001357414.2"/>
</dbReference>
<dbReference type="UCSC" id="uc010xnz.3">
    <property type="organism name" value="human"/>
</dbReference>
<dbReference type="AGR" id="HGNC:8373"/>
<dbReference type="CTD" id="26664"/>
<dbReference type="DisGeNET" id="26664"/>
<dbReference type="GeneCards" id="OR7C1"/>
<dbReference type="HGNC" id="HGNC:8373">
    <property type="gene designation" value="OR7C1"/>
</dbReference>
<dbReference type="HPA" id="ENSG00000127530">
    <property type="expression patterns" value="Tissue enhanced (parathyroid)"/>
</dbReference>
<dbReference type="neXtProt" id="NX_O76099"/>
<dbReference type="OpenTargets" id="ENSG00000127530"/>
<dbReference type="PharmGKB" id="PA32624"/>
<dbReference type="VEuPathDB" id="HostDB:ENSG00000127530"/>
<dbReference type="eggNOG" id="ENOG502T9M8">
    <property type="taxonomic scope" value="Eukaryota"/>
</dbReference>
<dbReference type="GeneTree" id="ENSGT00940000162084"/>
<dbReference type="HOGENOM" id="CLU_012526_1_0_1"/>
<dbReference type="InParanoid" id="O76099"/>
<dbReference type="OMA" id="KMEIPHF"/>
<dbReference type="OrthoDB" id="9708509at2759"/>
<dbReference type="PAN-GO" id="O76099">
    <property type="GO annotations" value="3 GO annotations based on evolutionary models"/>
</dbReference>
<dbReference type="PhylomeDB" id="O76099"/>
<dbReference type="TreeFam" id="TF337210"/>
<dbReference type="PathwayCommons" id="O76099"/>
<dbReference type="Reactome" id="R-HSA-381753">
    <property type="pathway name" value="Olfactory Signaling Pathway"/>
</dbReference>
<dbReference type="Reactome" id="R-HSA-9752946">
    <property type="pathway name" value="Expression and translocation of olfactory receptors"/>
</dbReference>
<dbReference type="SignaLink" id="O76099"/>
<dbReference type="BioGRID-ORCS" id="26664">
    <property type="hits" value="7 hits in 746 CRISPR screens"/>
</dbReference>
<dbReference type="ChiTaRS" id="OR7C1">
    <property type="organism name" value="human"/>
</dbReference>
<dbReference type="GeneWiki" id="OR7C1"/>
<dbReference type="GenomeRNAi" id="26664"/>
<dbReference type="Pharos" id="O76099">
    <property type="development level" value="Tdark"/>
</dbReference>
<dbReference type="PRO" id="PR:O76099"/>
<dbReference type="Proteomes" id="UP000005640">
    <property type="component" value="Chromosome 19"/>
</dbReference>
<dbReference type="RNAct" id="O76099">
    <property type="molecule type" value="protein"/>
</dbReference>
<dbReference type="Bgee" id="ENSG00000127530">
    <property type="expression patterns" value="Expressed in male germ line stem cell (sensu Vertebrata) in testis and 83 other cell types or tissues"/>
</dbReference>
<dbReference type="ExpressionAtlas" id="O76099">
    <property type="expression patterns" value="baseline and differential"/>
</dbReference>
<dbReference type="GO" id="GO:0005886">
    <property type="term" value="C:plasma membrane"/>
    <property type="evidence" value="ECO:0000318"/>
    <property type="project" value="GO_Central"/>
</dbReference>
<dbReference type="GO" id="GO:0004930">
    <property type="term" value="F:G protein-coupled receptor activity"/>
    <property type="evidence" value="ECO:0000304"/>
    <property type="project" value="ProtInc"/>
</dbReference>
<dbReference type="GO" id="GO:0004984">
    <property type="term" value="F:olfactory receptor activity"/>
    <property type="evidence" value="ECO:0000318"/>
    <property type="project" value="GO_Central"/>
</dbReference>
<dbReference type="GO" id="GO:0007165">
    <property type="term" value="P:signal transduction"/>
    <property type="evidence" value="ECO:0000318"/>
    <property type="project" value="GO_Central"/>
</dbReference>
<dbReference type="GO" id="GO:0007283">
    <property type="term" value="P:spermatogenesis"/>
    <property type="evidence" value="ECO:0000304"/>
    <property type="project" value="ProtInc"/>
</dbReference>
<dbReference type="CDD" id="cd15234">
    <property type="entry name" value="7tmA_OR7-like"/>
    <property type="match status" value="1"/>
</dbReference>
<dbReference type="FunFam" id="1.20.1070.10:FF:000009">
    <property type="entry name" value="Olfactory receptor"/>
    <property type="match status" value="1"/>
</dbReference>
<dbReference type="Gene3D" id="1.20.1070.10">
    <property type="entry name" value="Rhodopsin 7-helix transmembrane proteins"/>
    <property type="match status" value="1"/>
</dbReference>
<dbReference type="InterPro" id="IPR000276">
    <property type="entry name" value="GPCR_Rhodpsn"/>
</dbReference>
<dbReference type="InterPro" id="IPR017452">
    <property type="entry name" value="GPCR_Rhodpsn_7TM"/>
</dbReference>
<dbReference type="InterPro" id="IPR000725">
    <property type="entry name" value="Olfact_rcpt"/>
</dbReference>
<dbReference type="PANTHER" id="PTHR48001">
    <property type="entry name" value="OLFACTORY RECEPTOR"/>
    <property type="match status" value="1"/>
</dbReference>
<dbReference type="Pfam" id="PF13853">
    <property type="entry name" value="7tm_4"/>
    <property type="match status" value="1"/>
</dbReference>
<dbReference type="PRINTS" id="PR00237">
    <property type="entry name" value="GPCRRHODOPSN"/>
</dbReference>
<dbReference type="PRINTS" id="PR00245">
    <property type="entry name" value="OLFACTORYR"/>
</dbReference>
<dbReference type="SUPFAM" id="SSF81321">
    <property type="entry name" value="Family A G protein-coupled receptor-like"/>
    <property type="match status" value="1"/>
</dbReference>
<dbReference type="PROSITE" id="PS00237">
    <property type="entry name" value="G_PROTEIN_RECEP_F1_1"/>
    <property type="match status" value="1"/>
</dbReference>
<dbReference type="PROSITE" id="PS50262">
    <property type="entry name" value="G_PROTEIN_RECEP_F1_2"/>
    <property type="match status" value="1"/>
</dbReference>
<feature type="chain" id="PRO_0000150646" description="Olfactory receptor 7C1">
    <location>
        <begin position="1"/>
        <end position="320"/>
    </location>
</feature>
<feature type="topological domain" description="Extracellular" evidence="1">
    <location>
        <begin position="1"/>
        <end position="25"/>
    </location>
</feature>
<feature type="transmembrane region" description="Helical; Name=1" evidence="1">
    <location>
        <begin position="26"/>
        <end position="46"/>
    </location>
</feature>
<feature type="topological domain" description="Cytoplasmic" evidence="1">
    <location>
        <begin position="47"/>
        <end position="54"/>
    </location>
</feature>
<feature type="transmembrane region" description="Helical; Name=2" evidence="1">
    <location>
        <begin position="55"/>
        <end position="75"/>
    </location>
</feature>
<feature type="topological domain" description="Extracellular" evidence="1">
    <location>
        <begin position="76"/>
        <end position="99"/>
    </location>
</feature>
<feature type="transmembrane region" description="Helical; Name=3" evidence="1">
    <location>
        <begin position="100"/>
        <end position="120"/>
    </location>
</feature>
<feature type="topological domain" description="Cytoplasmic" evidence="1">
    <location>
        <begin position="121"/>
        <end position="139"/>
    </location>
</feature>
<feature type="transmembrane region" description="Helical; Name=4" evidence="1">
    <location>
        <begin position="140"/>
        <end position="160"/>
    </location>
</feature>
<feature type="topological domain" description="Extracellular" evidence="1">
    <location>
        <begin position="161"/>
        <end position="197"/>
    </location>
</feature>
<feature type="transmembrane region" description="Helical; Name=5" evidence="1">
    <location>
        <begin position="198"/>
        <end position="217"/>
    </location>
</feature>
<feature type="topological domain" description="Cytoplasmic" evidence="1">
    <location>
        <begin position="218"/>
        <end position="237"/>
    </location>
</feature>
<feature type="transmembrane region" description="Helical; Name=6" evidence="1">
    <location>
        <begin position="238"/>
        <end position="258"/>
    </location>
</feature>
<feature type="topological domain" description="Extracellular" evidence="1">
    <location>
        <begin position="259"/>
        <end position="271"/>
    </location>
</feature>
<feature type="transmembrane region" description="Helical; Name=7" evidence="1">
    <location>
        <begin position="272"/>
        <end position="292"/>
    </location>
</feature>
<feature type="topological domain" description="Cytoplasmic" evidence="1">
    <location>
        <begin position="293"/>
        <end position="313"/>
    </location>
</feature>
<feature type="glycosylation site" description="N-linked (GlcNAc...) asparagine" evidence="1">
    <location>
        <position position="5"/>
    </location>
</feature>
<feature type="disulfide bond" evidence="2">
    <location>
        <begin position="97"/>
        <end position="189"/>
    </location>
</feature>
<feature type="sequence variant" id="VAR_053232" description="In dbSNP:rs17230134.">
    <original>S</original>
    <variation>G</variation>
    <location>
        <position position="99"/>
    </location>
</feature>
<feature type="sequence variant" id="VAR_024111" description="In dbSNP:rs10415562.">
    <original>V</original>
    <variation>I</variation>
    <location>
        <position position="126"/>
    </location>
</feature>
<feature type="sequence variant" id="VAR_053233" description="In dbSNP:rs10415312." evidence="3 4">
    <original>E</original>
    <variation>K</variation>
    <location>
        <position position="171"/>
    </location>
</feature>
<feature type="sequence variant" id="VAR_024112" description="In dbSNP:rs16979912." evidence="4">
    <original>S</original>
    <variation>P</variation>
    <location>
        <position position="210"/>
    </location>
</feature>
<feature type="sequence conflict" description="In Ref. 3; CAA61823." evidence="5" ref="3">
    <original>V</original>
    <variation>L</variation>
    <location>
        <position position="247"/>
    </location>
</feature>
<comment type="function">
    <text evidence="5">Odorant receptor.</text>
</comment>
<comment type="interaction">
    <interactant intactId="EBI-21899465">
        <id>O76099</id>
    </interactant>
    <interactant intactId="EBI-10300345">
        <id>Q9BW85</id>
        <label>YJU2</label>
    </interactant>
    <organismsDiffer>false</organismsDiffer>
    <experiments>2</experiments>
</comment>
<comment type="subcellular location">
    <subcellularLocation>
        <location>Cell membrane</location>
        <topology>Multi-pass membrane protein</topology>
    </subcellularLocation>
</comment>
<comment type="similarity">
    <text evidence="2">Belongs to the G-protein coupled receptor 1 family.</text>
</comment>
<comment type="online information" name="Human Olfactory Receptor Data Exploratorium (HORDE)">
    <link uri="http://genome.weizmann.ac.il/horde/card/index/symbol:OR7C1"/>
</comment>
<keyword id="KW-1003">Cell membrane</keyword>
<keyword id="KW-1015">Disulfide bond</keyword>
<keyword id="KW-0297">G-protein coupled receptor</keyword>
<keyword id="KW-0325">Glycoprotein</keyword>
<keyword id="KW-0472">Membrane</keyword>
<keyword id="KW-0552">Olfaction</keyword>
<keyword id="KW-0675">Receptor</keyword>
<keyword id="KW-1185">Reference proteome</keyword>
<keyword id="KW-0716">Sensory transduction</keyword>
<keyword id="KW-0807">Transducer</keyword>
<keyword id="KW-0812">Transmembrane</keyword>
<keyword id="KW-1133">Transmembrane helix</keyword>
<gene>
    <name type="primary">OR7C1</name>
    <name type="synonym">OR7C4</name>
</gene>
<evidence type="ECO:0000255" key="1"/>
<evidence type="ECO:0000255" key="2">
    <source>
        <dbReference type="PROSITE-ProRule" id="PRU00521"/>
    </source>
</evidence>
<evidence type="ECO:0000269" key="3">
    <source>
    </source>
</evidence>
<evidence type="ECO:0000269" key="4">
    <source>
    </source>
</evidence>
<evidence type="ECO:0000305" key="5"/>
<protein>
    <recommendedName>
        <fullName>Olfactory receptor 7C1</fullName>
    </recommendedName>
    <alternativeName>
        <fullName>Olfactory receptor 7C4</fullName>
    </alternativeName>
    <alternativeName>
        <fullName>Olfactory receptor OR19-16</fullName>
    </alternativeName>
    <alternativeName>
        <fullName>Olfactory receptor TPCR86</fullName>
    </alternativeName>
</protein>
<reference key="1">
    <citation type="journal article" date="2004" name="Nature">
        <title>The DNA sequence and biology of human chromosome 19.</title>
        <authorList>
            <person name="Grimwood J."/>
            <person name="Gordon L.A."/>
            <person name="Olsen A.S."/>
            <person name="Terry A."/>
            <person name="Schmutz J."/>
            <person name="Lamerdin J.E."/>
            <person name="Hellsten U."/>
            <person name="Goodstein D."/>
            <person name="Couronne O."/>
            <person name="Tran-Gyamfi M."/>
            <person name="Aerts A."/>
            <person name="Altherr M."/>
            <person name="Ashworth L."/>
            <person name="Bajorek E."/>
            <person name="Black S."/>
            <person name="Branscomb E."/>
            <person name="Caenepeel S."/>
            <person name="Carrano A.V."/>
            <person name="Caoile C."/>
            <person name="Chan Y.M."/>
            <person name="Christensen M."/>
            <person name="Cleland C.A."/>
            <person name="Copeland A."/>
            <person name="Dalin E."/>
            <person name="Dehal P."/>
            <person name="Denys M."/>
            <person name="Detter J.C."/>
            <person name="Escobar J."/>
            <person name="Flowers D."/>
            <person name="Fotopulos D."/>
            <person name="Garcia C."/>
            <person name="Georgescu A.M."/>
            <person name="Glavina T."/>
            <person name="Gomez M."/>
            <person name="Gonzales E."/>
            <person name="Groza M."/>
            <person name="Hammon N."/>
            <person name="Hawkins T."/>
            <person name="Haydu L."/>
            <person name="Ho I."/>
            <person name="Huang W."/>
            <person name="Israni S."/>
            <person name="Jett J."/>
            <person name="Kadner K."/>
            <person name="Kimball H."/>
            <person name="Kobayashi A."/>
            <person name="Larionov V."/>
            <person name="Leem S.-H."/>
            <person name="Lopez F."/>
            <person name="Lou Y."/>
            <person name="Lowry S."/>
            <person name="Malfatti S."/>
            <person name="Martinez D."/>
            <person name="McCready P.M."/>
            <person name="Medina C."/>
            <person name="Morgan J."/>
            <person name="Nelson K."/>
            <person name="Nolan M."/>
            <person name="Ovcharenko I."/>
            <person name="Pitluck S."/>
            <person name="Pollard M."/>
            <person name="Popkie A.P."/>
            <person name="Predki P."/>
            <person name="Quan G."/>
            <person name="Ramirez L."/>
            <person name="Rash S."/>
            <person name="Retterer J."/>
            <person name="Rodriguez A."/>
            <person name="Rogers S."/>
            <person name="Salamov A."/>
            <person name="Salazar A."/>
            <person name="She X."/>
            <person name="Smith D."/>
            <person name="Slezak T."/>
            <person name="Solovyev V."/>
            <person name="Thayer N."/>
            <person name="Tice H."/>
            <person name="Tsai M."/>
            <person name="Ustaszewska A."/>
            <person name="Vo N."/>
            <person name="Wagner M."/>
            <person name="Wheeler J."/>
            <person name="Wu K."/>
            <person name="Xie G."/>
            <person name="Yang J."/>
            <person name="Dubchak I."/>
            <person name="Furey T.S."/>
            <person name="DeJong P."/>
            <person name="Dickson M."/>
            <person name="Gordon D."/>
            <person name="Eichler E.E."/>
            <person name="Pennacchio L.A."/>
            <person name="Richardson P."/>
            <person name="Stubbs L."/>
            <person name="Rokhsar D.S."/>
            <person name="Myers R.M."/>
            <person name="Rubin E.M."/>
            <person name="Lucas S.M."/>
        </authorList>
    </citation>
    <scope>NUCLEOTIDE SEQUENCE [LARGE SCALE GENOMIC DNA]</scope>
</reference>
<reference key="2">
    <citation type="journal article" date="2002" name="Genomics">
        <title>DEFOG: a practical scheme for deciphering families of genes.</title>
        <authorList>
            <person name="Fuchs T."/>
            <person name="Malecova B."/>
            <person name="Linhart C."/>
            <person name="Sharan R."/>
            <person name="Khen M."/>
            <person name="Herwig R."/>
            <person name="Shmulevich D."/>
            <person name="Elkon R."/>
            <person name="Steinfath M."/>
            <person name="O'Brien J.K."/>
            <person name="Radelof U."/>
            <person name="Lehrach H."/>
            <person name="Lancet D."/>
            <person name="Shamir R."/>
        </authorList>
    </citation>
    <scope>NUCLEOTIDE SEQUENCE [GENOMIC DNA] OF 68-283</scope>
    <scope>VARIANT LYS-171</scope>
</reference>
<reference key="3">
    <citation type="journal article" date="1997" name="Genomics">
        <title>Specific repertoire of olfactory receptor genes in the male germ cells of several mammalian species.</title>
        <authorList>
            <person name="Vanderhaeghen P."/>
            <person name="Schurmans S."/>
            <person name="Vassart G."/>
            <person name="Parmentier M."/>
        </authorList>
    </citation>
    <scope>NUCLEOTIDE SEQUENCE [MRNA] OF 126-282</scope>
    <scope>VARIANTS LYS-171 AND PRO-210</scope>
    <source>
        <tissue>Testis</tissue>
    </source>
</reference>
<reference key="4">
    <citation type="journal article" date="2004" name="Proc. Natl. Acad. Sci. U.S.A.">
        <title>The human olfactory receptor gene family.</title>
        <authorList>
            <person name="Malnic B."/>
            <person name="Godfrey P.A."/>
            <person name="Buck L.B."/>
        </authorList>
    </citation>
    <scope>IDENTIFICATION</scope>
</reference>
<reference key="5">
    <citation type="journal article" date="2004" name="Proc. Natl. Acad. Sci. U.S.A.">
        <authorList>
            <person name="Malnic B."/>
            <person name="Godfrey P.A."/>
            <person name="Buck L.B."/>
        </authorList>
    </citation>
    <scope>ERRATUM OF PUBMED:14983052</scope>
</reference>
<sequence length="320" mass="35519">METGNQTHAQEFLLLGFSATSEIQFILFGLFLSMYLVTFTGNLLIILAICSDSHLHTPMYFFLSNLSFADLCFTSTTVPKMLLNILTQNKFITYAGCLSQIFFFTSFGCLDNLLLTVMAYDRFVAVCHPLHYTVIMNPQLCGLLVLGSWCISVMGSLLETLTVLRLSFCTEMEIPHFFCDLLEVLKLACSDTFINNVVIYFATGVLGVISFTGIFFSYYKIVFSILRISSAGRKHKAFSTCGSHLSVVTLFYGTGFGVYLSSAATPSSRTSLVASVMYTMVTPMLNPFIYSLRNTDMKRALGRLLSRATFFNGDITAGLS</sequence>
<proteinExistence type="evidence at protein level"/>